<accession>A9MHT3</accession>
<keyword id="KW-0131">Cell cycle</keyword>
<keyword id="KW-0132">Cell division</keyword>
<keyword id="KW-0963">Cytoplasm</keyword>
<keyword id="KW-0238">DNA-binding</keyword>
<keyword id="KW-1185">Reference proteome</keyword>
<organism>
    <name type="scientific">Salmonella arizonae (strain ATCC BAA-731 / CDC346-86 / RSK2980)</name>
    <dbReference type="NCBI Taxonomy" id="41514"/>
    <lineage>
        <taxon>Bacteria</taxon>
        <taxon>Pseudomonadati</taxon>
        <taxon>Pseudomonadota</taxon>
        <taxon>Gammaproteobacteria</taxon>
        <taxon>Enterobacterales</taxon>
        <taxon>Enterobacteriaceae</taxon>
        <taxon>Salmonella</taxon>
    </lineage>
</organism>
<sequence>MKYQQLENLESGWKWKYLVKKHREGELITRYVEASAAQEAVNLLLALENEPVRVNVWIDRHMNPALLNRMKQTIRARRKRHFNAEHQHTRKKSIDLEFMVWQRLAGLAQRRGKTLSETIVQLIEDAEHKEKYATTMSTLKQDLQALLGKK</sequence>
<evidence type="ECO:0000255" key="1">
    <source>
        <dbReference type="HAMAP-Rule" id="MF_01073"/>
    </source>
</evidence>
<reference key="1">
    <citation type="submission" date="2007-11" db="EMBL/GenBank/DDBJ databases">
        <authorList>
            <consortium name="The Salmonella enterica serovar Arizonae Genome Sequencing Project"/>
            <person name="McClelland M."/>
            <person name="Sanderson E.K."/>
            <person name="Porwollik S."/>
            <person name="Spieth J."/>
            <person name="Clifton W.S."/>
            <person name="Fulton R."/>
            <person name="Chunyan W."/>
            <person name="Wollam A."/>
            <person name="Shah N."/>
            <person name="Pepin K."/>
            <person name="Bhonagiri V."/>
            <person name="Nash W."/>
            <person name="Johnson M."/>
            <person name="Thiruvilangam P."/>
            <person name="Wilson R."/>
        </authorList>
    </citation>
    <scope>NUCLEOTIDE SEQUENCE [LARGE SCALE GENOMIC DNA]</scope>
    <source>
        <strain>ATCC BAA-731 / CDC346-86 / RSK2980</strain>
    </source>
</reference>
<gene>
    <name evidence="1" type="primary">matP</name>
    <name type="ordered locus">SARI_01941</name>
</gene>
<protein>
    <recommendedName>
        <fullName evidence="1">Macrodomain Ter protein</fullName>
    </recommendedName>
</protein>
<feature type="chain" id="PRO_1000084507" description="Macrodomain Ter protein">
    <location>
        <begin position="1"/>
        <end position="150"/>
    </location>
</feature>
<comment type="function">
    <text evidence="1">Required for spatial organization of the terminus region of the chromosome (Ter macrodomain) during the cell cycle. Prevents early segregation of duplicated Ter macrodomains during cell division. Binds specifically to matS, which is a 13 bp signature motif repeated within the Ter macrodomain.</text>
</comment>
<comment type="subunit">
    <text evidence="1">Homodimer.</text>
</comment>
<comment type="subcellular location">
    <subcellularLocation>
        <location evidence="1">Cytoplasm</location>
    </subcellularLocation>
</comment>
<comment type="similarity">
    <text evidence="1">Belongs to the MatP family.</text>
</comment>
<name>MATP_SALAR</name>
<proteinExistence type="inferred from homology"/>
<dbReference type="EMBL" id="CP000880">
    <property type="protein sequence ID" value="ABX21823.1"/>
    <property type="molecule type" value="Genomic_DNA"/>
</dbReference>
<dbReference type="SMR" id="A9MHT3"/>
<dbReference type="STRING" id="41514.SARI_01941"/>
<dbReference type="KEGG" id="ses:SARI_01941"/>
<dbReference type="HOGENOM" id="CLU_142157_0_0_6"/>
<dbReference type="Proteomes" id="UP000002084">
    <property type="component" value="Chromosome"/>
</dbReference>
<dbReference type="GO" id="GO:0005737">
    <property type="term" value="C:cytoplasm"/>
    <property type="evidence" value="ECO:0007669"/>
    <property type="project" value="UniProtKB-SubCell"/>
</dbReference>
<dbReference type="GO" id="GO:0043565">
    <property type="term" value="F:sequence-specific DNA binding"/>
    <property type="evidence" value="ECO:0007669"/>
    <property type="project" value="UniProtKB-UniRule"/>
</dbReference>
<dbReference type="GO" id="GO:0051301">
    <property type="term" value="P:cell division"/>
    <property type="evidence" value="ECO:0007669"/>
    <property type="project" value="UniProtKB-UniRule"/>
</dbReference>
<dbReference type="GO" id="GO:0006355">
    <property type="term" value="P:regulation of DNA-templated transcription"/>
    <property type="evidence" value="ECO:0007669"/>
    <property type="project" value="InterPro"/>
</dbReference>
<dbReference type="Gene3D" id="1.20.1270.380">
    <property type="entry name" value="MatP, N-terminal domain"/>
    <property type="match status" value="1"/>
</dbReference>
<dbReference type="Gene3D" id="1.10.1220.10">
    <property type="entry name" value="Met repressor-like"/>
    <property type="match status" value="1"/>
</dbReference>
<dbReference type="HAMAP" id="MF_01073">
    <property type="entry name" value="MatP"/>
    <property type="match status" value="1"/>
</dbReference>
<dbReference type="InterPro" id="IPR013321">
    <property type="entry name" value="Arc_rbn_hlx_hlx"/>
</dbReference>
<dbReference type="InterPro" id="IPR009390">
    <property type="entry name" value="MatP"/>
</dbReference>
<dbReference type="InterPro" id="IPR035375">
    <property type="entry name" value="MatP_C"/>
</dbReference>
<dbReference type="InterPro" id="IPR035087">
    <property type="entry name" value="MatP_N"/>
</dbReference>
<dbReference type="InterPro" id="IPR038339">
    <property type="entry name" value="MatP_N_sf"/>
</dbReference>
<dbReference type="NCBIfam" id="NF003471">
    <property type="entry name" value="PRK05097.1"/>
    <property type="match status" value="1"/>
</dbReference>
<dbReference type="Pfam" id="PF06303">
    <property type="entry name" value="MatP"/>
    <property type="match status" value="1"/>
</dbReference>
<dbReference type="Pfam" id="PF17414">
    <property type="entry name" value="MatP_C"/>
    <property type="match status" value="1"/>
</dbReference>